<gene>
    <name evidence="9" type="primary">RABEPK</name>
    <name type="synonym">RAB9P40</name>
</gene>
<reference key="1">
    <citation type="journal article" date="1997" name="J. Cell Biol.">
        <title>A novel Rab9 effector required for endosome-to-TGN transport.</title>
        <authorList>
            <person name="Diaz E."/>
            <person name="Schimmoller F."/>
            <person name="Pfeffer S.R."/>
        </authorList>
    </citation>
    <scope>NUCLEOTIDE SEQUENCE [MRNA] (ISOFORM 1)</scope>
    <scope>FUNCTION</scope>
    <scope>SUBCELLULAR LOCATION</scope>
    <scope>INTERACTION WITH RAB9</scope>
</reference>
<reference key="2">
    <citation type="journal article" date="2004" name="Nat. Genet.">
        <title>Complete sequencing and characterization of 21,243 full-length human cDNAs.</title>
        <authorList>
            <person name="Ota T."/>
            <person name="Suzuki Y."/>
            <person name="Nishikawa T."/>
            <person name="Otsuki T."/>
            <person name="Sugiyama T."/>
            <person name="Irie R."/>
            <person name="Wakamatsu A."/>
            <person name="Hayashi K."/>
            <person name="Sato H."/>
            <person name="Nagai K."/>
            <person name="Kimura K."/>
            <person name="Makita H."/>
            <person name="Sekine M."/>
            <person name="Obayashi M."/>
            <person name="Nishi T."/>
            <person name="Shibahara T."/>
            <person name="Tanaka T."/>
            <person name="Ishii S."/>
            <person name="Yamamoto J."/>
            <person name="Saito K."/>
            <person name="Kawai Y."/>
            <person name="Isono Y."/>
            <person name="Nakamura Y."/>
            <person name="Nagahari K."/>
            <person name="Murakami K."/>
            <person name="Yasuda T."/>
            <person name="Iwayanagi T."/>
            <person name="Wagatsuma M."/>
            <person name="Shiratori A."/>
            <person name="Sudo H."/>
            <person name="Hosoiri T."/>
            <person name="Kaku Y."/>
            <person name="Kodaira H."/>
            <person name="Kondo H."/>
            <person name="Sugawara M."/>
            <person name="Takahashi M."/>
            <person name="Kanda K."/>
            <person name="Yokoi T."/>
            <person name="Furuya T."/>
            <person name="Kikkawa E."/>
            <person name="Omura Y."/>
            <person name="Abe K."/>
            <person name="Kamihara K."/>
            <person name="Katsuta N."/>
            <person name="Sato K."/>
            <person name="Tanikawa M."/>
            <person name="Yamazaki M."/>
            <person name="Ninomiya K."/>
            <person name="Ishibashi T."/>
            <person name="Yamashita H."/>
            <person name="Murakawa K."/>
            <person name="Fujimori K."/>
            <person name="Tanai H."/>
            <person name="Kimata M."/>
            <person name="Watanabe M."/>
            <person name="Hiraoka S."/>
            <person name="Chiba Y."/>
            <person name="Ishida S."/>
            <person name="Ono Y."/>
            <person name="Takiguchi S."/>
            <person name="Watanabe S."/>
            <person name="Yosida M."/>
            <person name="Hotuta T."/>
            <person name="Kusano J."/>
            <person name="Kanehori K."/>
            <person name="Takahashi-Fujii A."/>
            <person name="Hara H."/>
            <person name="Tanase T.-O."/>
            <person name="Nomura Y."/>
            <person name="Togiya S."/>
            <person name="Komai F."/>
            <person name="Hara R."/>
            <person name="Takeuchi K."/>
            <person name="Arita M."/>
            <person name="Imose N."/>
            <person name="Musashino K."/>
            <person name="Yuuki H."/>
            <person name="Oshima A."/>
            <person name="Sasaki N."/>
            <person name="Aotsuka S."/>
            <person name="Yoshikawa Y."/>
            <person name="Matsunawa H."/>
            <person name="Ichihara T."/>
            <person name="Shiohata N."/>
            <person name="Sano S."/>
            <person name="Moriya S."/>
            <person name="Momiyama H."/>
            <person name="Satoh N."/>
            <person name="Takami S."/>
            <person name="Terashima Y."/>
            <person name="Suzuki O."/>
            <person name="Nakagawa S."/>
            <person name="Senoh A."/>
            <person name="Mizoguchi H."/>
            <person name="Goto Y."/>
            <person name="Shimizu F."/>
            <person name="Wakebe H."/>
            <person name="Hishigaki H."/>
            <person name="Watanabe T."/>
            <person name="Sugiyama A."/>
            <person name="Takemoto M."/>
            <person name="Kawakami B."/>
            <person name="Yamazaki M."/>
            <person name="Watanabe K."/>
            <person name="Kumagai A."/>
            <person name="Itakura S."/>
            <person name="Fukuzumi Y."/>
            <person name="Fujimori Y."/>
            <person name="Komiyama M."/>
            <person name="Tashiro H."/>
            <person name="Tanigami A."/>
            <person name="Fujiwara T."/>
            <person name="Ono T."/>
            <person name="Yamada K."/>
            <person name="Fujii Y."/>
            <person name="Ozaki K."/>
            <person name="Hirao M."/>
            <person name="Ohmori Y."/>
            <person name="Kawabata A."/>
            <person name="Hikiji T."/>
            <person name="Kobatake N."/>
            <person name="Inagaki H."/>
            <person name="Ikema Y."/>
            <person name="Okamoto S."/>
            <person name="Okitani R."/>
            <person name="Kawakami T."/>
            <person name="Noguchi S."/>
            <person name="Itoh T."/>
            <person name="Shigeta K."/>
            <person name="Senba T."/>
            <person name="Matsumura K."/>
            <person name="Nakajima Y."/>
            <person name="Mizuno T."/>
            <person name="Morinaga M."/>
            <person name="Sasaki M."/>
            <person name="Togashi T."/>
            <person name="Oyama M."/>
            <person name="Hata H."/>
            <person name="Watanabe M."/>
            <person name="Komatsu T."/>
            <person name="Mizushima-Sugano J."/>
            <person name="Satoh T."/>
            <person name="Shirai Y."/>
            <person name="Takahashi Y."/>
            <person name="Nakagawa K."/>
            <person name="Okumura K."/>
            <person name="Nagase T."/>
            <person name="Nomura N."/>
            <person name="Kikuchi H."/>
            <person name="Masuho Y."/>
            <person name="Yamashita R."/>
            <person name="Nakai K."/>
            <person name="Yada T."/>
            <person name="Nakamura Y."/>
            <person name="Ohara O."/>
            <person name="Isogai T."/>
            <person name="Sugano S."/>
        </authorList>
    </citation>
    <scope>NUCLEOTIDE SEQUENCE [LARGE SCALE MRNA] (ISOFORM 1)</scope>
</reference>
<reference key="3">
    <citation type="submission" date="2004-06" db="EMBL/GenBank/DDBJ databases">
        <title>Cloning of human full open reading frames in Gateway(TM) system entry vector (pDONR201).</title>
        <authorList>
            <person name="Halleck A."/>
            <person name="Ebert L."/>
            <person name="Mkoundinya M."/>
            <person name="Schick M."/>
            <person name="Eisenstein S."/>
            <person name="Neubert P."/>
            <person name="Kstrang K."/>
            <person name="Schatten R."/>
            <person name="Shen B."/>
            <person name="Henze S."/>
            <person name="Mar W."/>
            <person name="Korn B."/>
            <person name="Zuo D."/>
            <person name="Hu Y."/>
            <person name="LaBaer J."/>
        </authorList>
    </citation>
    <scope>NUCLEOTIDE SEQUENCE [LARGE SCALE MRNA] (ISOFORM 1)</scope>
    <scope>VARIANT TYR-73</scope>
</reference>
<reference key="4">
    <citation type="journal article" date="2004" name="Nature">
        <title>DNA sequence and analysis of human chromosome 9.</title>
        <authorList>
            <person name="Humphray S.J."/>
            <person name="Oliver K."/>
            <person name="Hunt A.R."/>
            <person name="Plumb R.W."/>
            <person name="Loveland J.E."/>
            <person name="Howe K.L."/>
            <person name="Andrews T.D."/>
            <person name="Searle S."/>
            <person name="Hunt S.E."/>
            <person name="Scott C.E."/>
            <person name="Jones M.C."/>
            <person name="Ainscough R."/>
            <person name="Almeida J.P."/>
            <person name="Ambrose K.D."/>
            <person name="Ashwell R.I.S."/>
            <person name="Babbage A.K."/>
            <person name="Babbage S."/>
            <person name="Bagguley C.L."/>
            <person name="Bailey J."/>
            <person name="Banerjee R."/>
            <person name="Barker D.J."/>
            <person name="Barlow K.F."/>
            <person name="Bates K."/>
            <person name="Beasley H."/>
            <person name="Beasley O."/>
            <person name="Bird C.P."/>
            <person name="Bray-Allen S."/>
            <person name="Brown A.J."/>
            <person name="Brown J.Y."/>
            <person name="Burford D."/>
            <person name="Burrill W."/>
            <person name="Burton J."/>
            <person name="Carder C."/>
            <person name="Carter N.P."/>
            <person name="Chapman J.C."/>
            <person name="Chen Y."/>
            <person name="Clarke G."/>
            <person name="Clark S.Y."/>
            <person name="Clee C.M."/>
            <person name="Clegg S."/>
            <person name="Collier R.E."/>
            <person name="Corby N."/>
            <person name="Crosier M."/>
            <person name="Cummings A.T."/>
            <person name="Davies J."/>
            <person name="Dhami P."/>
            <person name="Dunn M."/>
            <person name="Dutta I."/>
            <person name="Dyer L.W."/>
            <person name="Earthrowl M.E."/>
            <person name="Faulkner L."/>
            <person name="Fleming C.J."/>
            <person name="Frankish A."/>
            <person name="Frankland J.A."/>
            <person name="French L."/>
            <person name="Fricker D.G."/>
            <person name="Garner P."/>
            <person name="Garnett J."/>
            <person name="Ghori J."/>
            <person name="Gilbert J.G.R."/>
            <person name="Glison C."/>
            <person name="Grafham D.V."/>
            <person name="Gribble S."/>
            <person name="Griffiths C."/>
            <person name="Griffiths-Jones S."/>
            <person name="Grocock R."/>
            <person name="Guy J."/>
            <person name="Hall R.E."/>
            <person name="Hammond S."/>
            <person name="Harley J.L."/>
            <person name="Harrison E.S.I."/>
            <person name="Hart E.A."/>
            <person name="Heath P.D."/>
            <person name="Henderson C.D."/>
            <person name="Hopkins B.L."/>
            <person name="Howard P.J."/>
            <person name="Howden P.J."/>
            <person name="Huckle E."/>
            <person name="Johnson C."/>
            <person name="Johnson D."/>
            <person name="Joy A.A."/>
            <person name="Kay M."/>
            <person name="Keenan S."/>
            <person name="Kershaw J.K."/>
            <person name="Kimberley A.M."/>
            <person name="King A."/>
            <person name="Knights A."/>
            <person name="Laird G.K."/>
            <person name="Langford C."/>
            <person name="Lawlor S."/>
            <person name="Leongamornlert D.A."/>
            <person name="Leversha M."/>
            <person name="Lloyd C."/>
            <person name="Lloyd D.M."/>
            <person name="Lovell J."/>
            <person name="Martin S."/>
            <person name="Mashreghi-Mohammadi M."/>
            <person name="Matthews L."/>
            <person name="McLaren S."/>
            <person name="McLay K.E."/>
            <person name="McMurray A."/>
            <person name="Milne S."/>
            <person name="Nickerson T."/>
            <person name="Nisbett J."/>
            <person name="Nordsiek G."/>
            <person name="Pearce A.V."/>
            <person name="Peck A.I."/>
            <person name="Porter K.M."/>
            <person name="Pandian R."/>
            <person name="Pelan S."/>
            <person name="Phillimore B."/>
            <person name="Povey S."/>
            <person name="Ramsey Y."/>
            <person name="Rand V."/>
            <person name="Scharfe M."/>
            <person name="Sehra H.K."/>
            <person name="Shownkeen R."/>
            <person name="Sims S.K."/>
            <person name="Skuce C.D."/>
            <person name="Smith M."/>
            <person name="Steward C.A."/>
            <person name="Swarbreck D."/>
            <person name="Sycamore N."/>
            <person name="Tester J."/>
            <person name="Thorpe A."/>
            <person name="Tracey A."/>
            <person name="Tromans A."/>
            <person name="Thomas D.W."/>
            <person name="Wall M."/>
            <person name="Wallis J.M."/>
            <person name="West A.P."/>
            <person name="Whitehead S.L."/>
            <person name="Willey D.L."/>
            <person name="Williams S.A."/>
            <person name="Wilming L."/>
            <person name="Wray P.W."/>
            <person name="Young L."/>
            <person name="Ashurst J.L."/>
            <person name="Coulson A."/>
            <person name="Blocker H."/>
            <person name="Durbin R.M."/>
            <person name="Sulston J.E."/>
            <person name="Hubbard T."/>
            <person name="Jackson M.J."/>
            <person name="Bentley D.R."/>
            <person name="Beck S."/>
            <person name="Rogers J."/>
            <person name="Dunham I."/>
        </authorList>
    </citation>
    <scope>NUCLEOTIDE SEQUENCE [LARGE SCALE GENOMIC DNA]</scope>
</reference>
<reference key="5">
    <citation type="submission" date="2005-07" db="EMBL/GenBank/DDBJ databases">
        <authorList>
            <person name="Mural R.J."/>
            <person name="Istrail S."/>
            <person name="Sutton G."/>
            <person name="Florea L."/>
            <person name="Halpern A.L."/>
            <person name="Mobarry C.M."/>
            <person name="Lippert R."/>
            <person name="Walenz B."/>
            <person name="Shatkay H."/>
            <person name="Dew I."/>
            <person name="Miller J.R."/>
            <person name="Flanigan M.J."/>
            <person name="Edwards N.J."/>
            <person name="Bolanos R."/>
            <person name="Fasulo D."/>
            <person name="Halldorsson B.V."/>
            <person name="Hannenhalli S."/>
            <person name="Turner R."/>
            <person name="Yooseph S."/>
            <person name="Lu F."/>
            <person name="Nusskern D.R."/>
            <person name="Shue B.C."/>
            <person name="Zheng X.H."/>
            <person name="Zhong F."/>
            <person name="Delcher A.L."/>
            <person name="Huson D.H."/>
            <person name="Kravitz S.A."/>
            <person name="Mouchard L."/>
            <person name="Reinert K."/>
            <person name="Remington K.A."/>
            <person name="Clark A.G."/>
            <person name="Waterman M.S."/>
            <person name="Eichler E.E."/>
            <person name="Adams M.D."/>
            <person name="Hunkapiller M.W."/>
            <person name="Myers E.W."/>
            <person name="Venter J.C."/>
        </authorList>
    </citation>
    <scope>NUCLEOTIDE SEQUENCE [LARGE SCALE GENOMIC DNA]</scope>
</reference>
<reference key="6">
    <citation type="journal article" date="2004" name="Genome Res.">
        <title>The status, quality, and expansion of the NIH full-length cDNA project: the Mammalian Gene Collection (MGC).</title>
        <authorList>
            <consortium name="The MGC Project Team"/>
        </authorList>
    </citation>
    <scope>NUCLEOTIDE SEQUENCE [LARGE SCALE MRNA] (ISOFORMS 1 AND 2)</scope>
    <scope>VARIANTS GLY-60; TYR-73 AND GLY-313</scope>
    <source>
        <tissue>Bone marrow</tissue>
        <tissue>Lung</tissue>
        <tissue>Mammary gland</tissue>
    </source>
</reference>
<reference key="7">
    <citation type="journal article" date="2007" name="BMC Genomics">
        <title>The full-ORF clone resource of the German cDNA consortium.</title>
        <authorList>
            <person name="Bechtel S."/>
            <person name="Rosenfelder H."/>
            <person name="Duda A."/>
            <person name="Schmidt C.P."/>
            <person name="Ernst U."/>
            <person name="Wellenreuther R."/>
            <person name="Mehrle A."/>
            <person name="Schuster C."/>
            <person name="Bahr A."/>
            <person name="Bloecker H."/>
            <person name="Heubner D."/>
            <person name="Hoerlein A."/>
            <person name="Michel G."/>
            <person name="Wedler H."/>
            <person name="Koehrer K."/>
            <person name="Ottenwaelder B."/>
            <person name="Poustka A."/>
            <person name="Wiemann S."/>
            <person name="Schupp I."/>
        </authorList>
    </citation>
    <scope>NUCLEOTIDE SEQUENCE [LARGE SCALE MRNA] OF 1-121</scope>
    <source>
        <tissue>Endometrial tumor</tissue>
    </source>
</reference>
<reference key="8">
    <citation type="journal article" date="2003" name="J. Biol. Chem.">
        <title>Active PIKfyve associates with and promotes the membrane attachment of the late endosome-to-trans-Golgi network transport factor Rab9 effector p40.</title>
        <authorList>
            <person name="Ikonomov O.C."/>
            <person name="Sbrissa D."/>
            <person name="Mlak K."/>
            <person name="Deeb R."/>
            <person name="Fligger J."/>
            <person name="Soans A."/>
            <person name="Finley R.L. Jr."/>
            <person name="Shisheva A."/>
        </authorList>
    </citation>
    <scope>INTERACTION WITH PIKFYVE</scope>
    <scope>SUBCELLULAR LOCATION</scope>
    <scope>PHOSPHORYLATION</scope>
</reference>
<reference key="9">
    <citation type="journal article" date="2006" name="J. Cell Biol.">
        <title>TIP47 is a key effector for Rab9 localization.</title>
        <authorList>
            <person name="Aivazian D."/>
            <person name="Serrano R.L."/>
            <person name="Pfeffer S."/>
        </authorList>
    </citation>
    <scope>INTERACTION WITH RAB9</scope>
    <scope>SUBCELLULAR LOCATION</scope>
</reference>
<reference key="10">
    <citation type="journal article" date="2011" name="BMC Syst. Biol.">
        <title>Initial characterization of the human central proteome.</title>
        <authorList>
            <person name="Burkard T.R."/>
            <person name="Planyavsky M."/>
            <person name="Kaupe I."/>
            <person name="Breitwieser F.P."/>
            <person name="Buerckstuemmer T."/>
            <person name="Bennett K.L."/>
            <person name="Superti-Furga G."/>
            <person name="Colinge J."/>
        </authorList>
    </citation>
    <scope>IDENTIFICATION BY MASS SPECTROMETRY [LARGE SCALE ANALYSIS]</scope>
</reference>
<reference key="11">
    <citation type="journal article" date="2012" name="Proc. Natl. Acad. Sci. U.S.A.">
        <title>N-terminal acetylome analyses and functional insights of the N-terminal acetyltransferase NatB.</title>
        <authorList>
            <person name="Van Damme P."/>
            <person name="Lasa M."/>
            <person name="Polevoda B."/>
            <person name="Gazquez C."/>
            <person name="Elosegui-Artola A."/>
            <person name="Kim D.S."/>
            <person name="De Juan-Pardo E."/>
            <person name="Demeyer K."/>
            <person name="Hole K."/>
            <person name="Larrea E."/>
            <person name="Timmerman E."/>
            <person name="Prieto J."/>
            <person name="Arnesen T."/>
            <person name="Sherman F."/>
            <person name="Gevaert K."/>
            <person name="Aldabe R."/>
        </authorList>
    </citation>
    <scope>IDENTIFICATION BY MASS SPECTROMETRY [LARGE SCALE ANALYSIS]</scope>
</reference>
<reference key="12">
    <citation type="journal article" date="2013" name="J. Proteome Res.">
        <title>Toward a comprehensive characterization of a human cancer cell phosphoproteome.</title>
        <authorList>
            <person name="Zhou H."/>
            <person name="Di Palma S."/>
            <person name="Preisinger C."/>
            <person name="Peng M."/>
            <person name="Polat A.N."/>
            <person name="Heck A.J."/>
            <person name="Mohammed S."/>
        </authorList>
    </citation>
    <scope>PHOSPHORYLATION [LARGE SCALE ANALYSIS] AT SER-133</scope>
    <scope>IDENTIFICATION BY MASS SPECTROMETRY [LARGE SCALE ANALYSIS]</scope>
    <source>
        <tissue>Cervix carcinoma</tissue>
        <tissue>Erythroleukemia</tissue>
    </source>
</reference>
<accession>Q7Z6M1</accession>
<accession>A8K403</accession>
<accession>O00568</accession>
<accession>Q69YR2</accession>
<accession>Q6FHA4</accession>
<accession>Q6IBG7</accession>
<accession>Q6P092</accession>
<accession>Q86Y76</accession>
<accession>Q9BWB1</accession>
<organism>
    <name type="scientific">Homo sapiens</name>
    <name type="common">Human</name>
    <dbReference type="NCBI Taxonomy" id="9606"/>
    <lineage>
        <taxon>Eukaryota</taxon>
        <taxon>Metazoa</taxon>
        <taxon>Chordata</taxon>
        <taxon>Craniata</taxon>
        <taxon>Vertebrata</taxon>
        <taxon>Euteleostomi</taxon>
        <taxon>Mammalia</taxon>
        <taxon>Eutheria</taxon>
        <taxon>Euarchontoglires</taxon>
        <taxon>Primates</taxon>
        <taxon>Haplorrhini</taxon>
        <taxon>Catarrhini</taxon>
        <taxon>Hominidae</taxon>
        <taxon>Homo</taxon>
    </lineage>
</organism>
<proteinExistence type="evidence at protein level"/>
<feature type="chain" id="PRO_0000280616" description="Rab9 effector protein with kelch motifs">
    <location>
        <begin position="1"/>
        <end position="372"/>
    </location>
</feature>
<feature type="repeat" description="Kelch 1">
    <location>
        <begin position="49"/>
        <end position="95"/>
    </location>
</feature>
<feature type="repeat" description="Kelch 2">
    <location>
        <begin position="100"/>
        <end position="146"/>
    </location>
</feature>
<feature type="repeat" description="Kelch 3">
    <location>
        <begin position="151"/>
        <end position="200"/>
    </location>
</feature>
<feature type="repeat" description="Kelch 4">
    <location>
        <begin position="204"/>
        <end position="250"/>
    </location>
</feature>
<feature type="repeat" description="Kelch 5">
    <location>
        <begin position="254"/>
        <end position="303"/>
    </location>
</feature>
<feature type="region of interest" description="Disordered" evidence="1">
    <location>
        <begin position="314"/>
        <end position="340"/>
    </location>
</feature>
<feature type="compositionally biased region" description="Basic and acidic residues" evidence="1">
    <location>
        <begin position="321"/>
        <end position="340"/>
    </location>
</feature>
<feature type="modified residue" description="Phosphoserine" evidence="10">
    <location>
        <position position="133"/>
    </location>
</feature>
<feature type="splice variant" id="VSP_023828" description="In isoform 2." evidence="7">
    <location>
        <begin position="71"/>
        <end position="121"/>
    </location>
</feature>
<feature type="sequence variant" id="VAR_050058" description="In dbSNP:rs13302059.">
    <original>P</original>
    <variation>A</variation>
    <location>
        <position position="58"/>
    </location>
</feature>
<feature type="sequence variant" id="VAR_031175" description="In dbSNP:rs17855990." evidence="3">
    <original>R</original>
    <variation>G</variation>
    <location>
        <position position="60"/>
    </location>
</feature>
<feature type="sequence variant" id="VAR_031176" description="In dbSNP:rs13302050.">
    <original>T</original>
    <variation>P</variation>
    <location>
        <position position="67"/>
    </location>
</feature>
<feature type="sequence variant" id="VAR_031177" description="In dbSNP:rs1128362." evidence="3 6">
    <original>H</original>
    <variation>Y</variation>
    <location>
        <position position="73"/>
    </location>
</feature>
<feature type="sequence variant" id="VAR_050059" description="In dbSNP:rs34991596.">
    <original>S</original>
    <variation>C</variation>
    <location>
        <position position="95"/>
    </location>
</feature>
<feature type="sequence variant" id="VAR_031178" description="In dbSNP:rs17849326." evidence="3">
    <original>D</original>
    <variation>G</variation>
    <location>
        <position position="313"/>
    </location>
</feature>
<feature type="sequence variant" id="VAR_031179" description="In dbSNP:rs15233.">
    <original>M</original>
    <variation>I</variation>
    <location>
        <position position="333"/>
    </location>
</feature>
<feature type="sequence conflict" description="In Ref. 3; CAG46649." evidence="8" ref="3">
    <original>E</original>
    <variation>K</variation>
    <location>
        <position position="8"/>
    </location>
</feature>
<feature type="sequence conflict" description="In Ref. 1; CAB09808." evidence="8" ref="1">
    <original>A</original>
    <variation>V</variation>
    <location>
        <position position="329"/>
    </location>
</feature>
<dbReference type="EMBL" id="Z97074">
    <property type="protein sequence ID" value="CAB09808.1"/>
    <property type="molecule type" value="mRNA"/>
</dbReference>
<dbReference type="EMBL" id="AK290768">
    <property type="protein sequence ID" value="BAF83457.1"/>
    <property type="molecule type" value="mRNA"/>
</dbReference>
<dbReference type="EMBL" id="CR456837">
    <property type="protein sequence ID" value="CAG33118.1"/>
    <property type="molecule type" value="mRNA"/>
</dbReference>
<dbReference type="EMBL" id="CR541851">
    <property type="protein sequence ID" value="CAG46649.1"/>
    <property type="molecule type" value="mRNA"/>
</dbReference>
<dbReference type="EMBL" id="AL354710">
    <property type="status" value="NOT_ANNOTATED_CDS"/>
    <property type="molecule type" value="Genomic_DNA"/>
</dbReference>
<dbReference type="EMBL" id="AL445930">
    <property type="status" value="NOT_ANNOTATED_CDS"/>
    <property type="molecule type" value="Genomic_DNA"/>
</dbReference>
<dbReference type="EMBL" id="CH471090">
    <property type="protein sequence ID" value="EAW87616.1"/>
    <property type="molecule type" value="Genomic_DNA"/>
</dbReference>
<dbReference type="EMBL" id="BC000503">
    <property type="protein sequence ID" value="AAH00503.1"/>
    <property type="molecule type" value="mRNA"/>
</dbReference>
<dbReference type="EMBL" id="BC047023">
    <property type="protein sequence ID" value="AAH47023.1"/>
    <property type="molecule type" value="mRNA"/>
</dbReference>
<dbReference type="EMBL" id="BC053541">
    <property type="protein sequence ID" value="AAH53541.1"/>
    <property type="molecule type" value="mRNA"/>
</dbReference>
<dbReference type="EMBL" id="BC065725">
    <property type="protein sequence ID" value="AAH65725.1"/>
    <property type="molecule type" value="mRNA"/>
</dbReference>
<dbReference type="EMBL" id="AL832249">
    <property type="protein sequence ID" value="CAH10393.1"/>
    <property type="molecule type" value="mRNA"/>
</dbReference>
<dbReference type="CCDS" id="CCDS55341.1">
    <molecule id="Q7Z6M1-2"/>
</dbReference>
<dbReference type="CCDS" id="CCDS6862.1">
    <molecule id="Q7Z6M1-1"/>
</dbReference>
<dbReference type="RefSeq" id="NP_001167623.1">
    <molecule id="Q7Z6M1-1"/>
    <property type="nucleotide sequence ID" value="NM_001174152.2"/>
</dbReference>
<dbReference type="RefSeq" id="NP_001167624.1">
    <molecule id="Q7Z6M1-2"/>
    <property type="nucleotide sequence ID" value="NM_001174153.2"/>
</dbReference>
<dbReference type="RefSeq" id="NP_005824.2">
    <molecule id="Q7Z6M1-1"/>
    <property type="nucleotide sequence ID" value="NM_005833.3"/>
</dbReference>
<dbReference type="RefSeq" id="XP_016869666.1">
    <molecule id="Q7Z6M1-1"/>
    <property type="nucleotide sequence ID" value="XM_017014177.2"/>
</dbReference>
<dbReference type="SMR" id="Q7Z6M1"/>
<dbReference type="BioGRID" id="115538">
    <property type="interactions" value="52"/>
</dbReference>
<dbReference type="FunCoup" id="Q7Z6M1">
    <property type="interactions" value="1503"/>
</dbReference>
<dbReference type="IntAct" id="Q7Z6M1">
    <property type="interactions" value="20"/>
</dbReference>
<dbReference type="MINT" id="Q7Z6M1"/>
<dbReference type="STRING" id="9606.ENSP00000362639"/>
<dbReference type="GlyGen" id="Q7Z6M1">
    <property type="glycosylation" value="1 site, 1 O-linked glycan (1 site)"/>
</dbReference>
<dbReference type="iPTMnet" id="Q7Z6M1"/>
<dbReference type="PhosphoSitePlus" id="Q7Z6M1"/>
<dbReference type="BioMuta" id="RABEPK"/>
<dbReference type="DMDM" id="74750172"/>
<dbReference type="jPOST" id="Q7Z6M1"/>
<dbReference type="MassIVE" id="Q7Z6M1"/>
<dbReference type="PaxDb" id="9606-ENSP00000362639"/>
<dbReference type="PeptideAtlas" id="Q7Z6M1"/>
<dbReference type="ProteomicsDB" id="69444">
    <molecule id="Q7Z6M1-1"/>
</dbReference>
<dbReference type="ProteomicsDB" id="69445">
    <molecule id="Q7Z6M1-2"/>
</dbReference>
<dbReference type="Pumba" id="Q7Z6M1"/>
<dbReference type="Antibodypedia" id="16386">
    <property type="antibodies" value="256 antibodies from 28 providers"/>
</dbReference>
<dbReference type="DNASU" id="10244"/>
<dbReference type="Ensembl" id="ENST00000259460.12">
    <molecule id="Q7Z6M1-2"/>
    <property type="protein sequence ID" value="ENSP00000259460.8"/>
    <property type="gene ID" value="ENSG00000136933.17"/>
</dbReference>
<dbReference type="Ensembl" id="ENST00000373538.8">
    <molecule id="Q7Z6M1-1"/>
    <property type="protein sequence ID" value="ENSP00000362639.3"/>
    <property type="gene ID" value="ENSG00000136933.17"/>
</dbReference>
<dbReference type="Ensembl" id="ENST00000394125.8">
    <molecule id="Q7Z6M1-1"/>
    <property type="protein sequence ID" value="ENSP00000377683.4"/>
    <property type="gene ID" value="ENSG00000136933.17"/>
</dbReference>
<dbReference type="GeneID" id="10244"/>
<dbReference type="KEGG" id="hsa:10244"/>
<dbReference type="MANE-Select" id="ENST00000373538.8">
    <property type="protein sequence ID" value="ENSP00000362639.3"/>
    <property type="RefSeq nucleotide sequence ID" value="NM_005833.4"/>
    <property type="RefSeq protein sequence ID" value="NP_005824.2"/>
</dbReference>
<dbReference type="UCSC" id="uc004bpi.4">
    <molecule id="Q7Z6M1-1"/>
    <property type="organism name" value="human"/>
</dbReference>
<dbReference type="AGR" id="HGNC:16896"/>
<dbReference type="CTD" id="10244"/>
<dbReference type="DisGeNET" id="10244"/>
<dbReference type="GeneCards" id="RABEPK"/>
<dbReference type="HGNC" id="HGNC:16896">
    <property type="gene designation" value="RABEPK"/>
</dbReference>
<dbReference type="HPA" id="ENSG00000136933">
    <property type="expression patterns" value="Low tissue specificity"/>
</dbReference>
<dbReference type="MIM" id="605962">
    <property type="type" value="gene"/>
</dbReference>
<dbReference type="neXtProt" id="NX_Q7Z6M1"/>
<dbReference type="OpenTargets" id="ENSG00000136933"/>
<dbReference type="PharmGKB" id="PA142671100"/>
<dbReference type="VEuPathDB" id="HostDB:ENSG00000136933"/>
<dbReference type="eggNOG" id="KOG0379">
    <property type="taxonomic scope" value="Eukaryota"/>
</dbReference>
<dbReference type="GeneTree" id="ENSGT00940000158763"/>
<dbReference type="HOGENOM" id="CLU_045313_0_0_1"/>
<dbReference type="InParanoid" id="Q7Z6M1"/>
<dbReference type="OMA" id="CTPGSIW"/>
<dbReference type="OrthoDB" id="10251809at2759"/>
<dbReference type="PAN-GO" id="Q7Z6M1">
    <property type="GO annotations" value="0 GO annotations based on evolutionary models"/>
</dbReference>
<dbReference type="PhylomeDB" id="Q7Z6M1"/>
<dbReference type="TreeFam" id="TF329153"/>
<dbReference type="PathwayCommons" id="Q7Z6M1"/>
<dbReference type="Reactome" id="R-HSA-6811440">
    <property type="pathway name" value="Retrograde transport at the Trans-Golgi-Network"/>
</dbReference>
<dbReference type="SignaLink" id="Q7Z6M1"/>
<dbReference type="SIGNOR" id="Q7Z6M1"/>
<dbReference type="BioGRID-ORCS" id="10244">
    <property type="hits" value="14 hits in 1160 CRISPR screens"/>
</dbReference>
<dbReference type="ChiTaRS" id="RABEPK">
    <property type="organism name" value="human"/>
</dbReference>
<dbReference type="GeneWiki" id="RABEPK"/>
<dbReference type="GenomeRNAi" id="10244"/>
<dbReference type="Pharos" id="Q7Z6M1">
    <property type="development level" value="Tdark"/>
</dbReference>
<dbReference type="PRO" id="PR:Q7Z6M1"/>
<dbReference type="Proteomes" id="UP000005640">
    <property type="component" value="Chromosome 9"/>
</dbReference>
<dbReference type="RNAct" id="Q7Z6M1">
    <property type="molecule type" value="protein"/>
</dbReference>
<dbReference type="Bgee" id="ENSG00000136933">
    <property type="expression patterns" value="Expressed in right lobe of liver and 203 other cell types or tissues"/>
</dbReference>
<dbReference type="ExpressionAtlas" id="Q7Z6M1">
    <property type="expression patterns" value="baseline and differential"/>
</dbReference>
<dbReference type="GO" id="GO:0005829">
    <property type="term" value="C:cytosol"/>
    <property type="evidence" value="ECO:0000304"/>
    <property type="project" value="Reactome"/>
</dbReference>
<dbReference type="GO" id="GO:0005768">
    <property type="term" value="C:endosome"/>
    <property type="evidence" value="ECO:0000304"/>
    <property type="project" value="ProtInc"/>
</dbReference>
<dbReference type="GO" id="GO:0010008">
    <property type="term" value="C:endosome membrane"/>
    <property type="evidence" value="ECO:0007669"/>
    <property type="project" value="UniProtKB-SubCell"/>
</dbReference>
<dbReference type="GO" id="GO:0043231">
    <property type="term" value="C:intracellular membrane-bounded organelle"/>
    <property type="evidence" value="ECO:0000314"/>
    <property type="project" value="HPA"/>
</dbReference>
<dbReference type="GO" id="GO:0032588">
    <property type="term" value="C:trans-Golgi network membrane"/>
    <property type="evidence" value="ECO:0000304"/>
    <property type="project" value="Reactome"/>
</dbReference>
<dbReference type="GO" id="GO:0030133">
    <property type="term" value="C:transport vesicle"/>
    <property type="evidence" value="ECO:0000304"/>
    <property type="project" value="Reactome"/>
</dbReference>
<dbReference type="GO" id="GO:0006898">
    <property type="term" value="P:receptor-mediated endocytosis"/>
    <property type="evidence" value="ECO:0000304"/>
    <property type="project" value="ProtInc"/>
</dbReference>
<dbReference type="GO" id="GO:0006904">
    <property type="term" value="P:vesicle docking involved in exocytosis"/>
    <property type="evidence" value="ECO:0000304"/>
    <property type="project" value="ProtInc"/>
</dbReference>
<dbReference type="FunFam" id="2.120.10.80:FF:000093">
    <property type="entry name" value="Rab9 effector protein with kelch motifs"/>
    <property type="match status" value="1"/>
</dbReference>
<dbReference type="FunFam" id="2.120.10.80:FF:000094">
    <property type="entry name" value="Rab9 effector protein with kelch motifs"/>
    <property type="match status" value="1"/>
</dbReference>
<dbReference type="Gene3D" id="2.120.10.80">
    <property type="entry name" value="Kelch-type beta propeller"/>
    <property type="match status" value="2"/>
</dbReference>
<dbReference type="InterPro" id="IPR015915">
    <property type="entry name" value="Kelch-typ_b-propeller"/>
</dbReference>
<dbReference type="InterPro" id="IPR052124">
    <property type="entry name" value="Rab9_kelch_effector"/>
</dbReference>
<dbReference type="PANTHER" id="PTHR46647">
    <property type="entry name" value="RAB9 EFFECTOR PROTEIN WITH KELCH MOTIFS"/>
    <property type="match status" value="1"/>
</dbReference>
<dbReference type="PANTHER" id="PTHR46647:SF1">
    <property type="entry name" value="RAB9 EFFECTOR PROTEIN WITH KELCH MOTIFS"/>
    <property type="match status" value="1"/>
</dbReference>
<dbReference type="Pfam" id="PF24681">
    <property type="entry name" value="Kelch_KLHDC2_KLHL20_DRC7"/>
    <property type="match status" value="1"/>
</dbReference>
<dbReference type="SUPFAM" id="SSF117281">
    <property type="entry name" value="Kelch motif"/>
    <property type="match status" value="1"/>
</dbReference>
<protein>
    <recommendedName>
        <fullName evidence="8">Rab9 effector protein with kelch motifs</fullName>
    </recommendedName>
    <alternativeName>
        <fullName>40 kDa Rab9 effector protein</fullName>
    </alternativeName>
    <alternativeName>
        <fullName>p40</fullName>
    </alternativeName>
</protein>
<name>RABEK_HUMAN</name>
<evidence type="ECO:0000256" key="1">
    <source>
        <dbReference type="SAM" id="MobiDB-lite"/>
    </source>
</evidence>
<evidence type="ECO:0000269" key="2">
    <source>
    </source>
</evidence>
<evidence type="ECO:0000269" key="3">
    <source>
    </source>
</evidence>
<evidence type="ECO:0000269" key="4">
    <source>
    </source>
</evidence>
<evidence type="ECO:0000269" key="5">
    <source>
    </source>
</evidence>
<evidence type="ECO:0000269" key="6">
    <source ref="3"/>
</evidence>
<evidence type="ECO:0000303" key="7">
    <source>
    </source>
</evidence>
<evidence type="ECO:0000305" key="8"/>
<evidence type="ECO:0000312" key="9">
    <source>
        <dbReference type="HGNC" id="HGNC:16896"/>
    </source>
</evidence>
<evidence type="ECO:0007744" key="10">
    <source>
    </source>
</evidence>
<sequence length="372" mass="40565">MKQLPVLEPGDKPRKATWYTLTVPGDSPCARVGHSCSYLPPVGNAKRGKVFIVGGANPNRSFSDVHTMDLGKHQWDLDTCKGLLPRYEHASFIPSCTPDRIWVFGGANQSGNRNCLQVLNPETRTWTTPEVTSPPPSPRTFHTSSAAIGNQLYVFGGGERGAQPVQDTKLHVFDANTLTWSQPETLGNPPSPRHGHVMVAAGTKLFIHGGLAGDRFYDDLHCIDISDMKWQKLNPTGAAPAGCAAHSAVAMGKHVYIFGGMTPAGALDTMYQYHTEEQHWTLLKFDTLLPPGRLDHSMCIIPWPVTCASEKEDSNSLTLNHEAEKEDSADKVMSHSGDSHEESQTATLLCLVFGGMNTEGEIYDDCIVTVVD</sequence>
<keyword id="KW-0025">Alternative splicing</keyword>
<keyword id="KW-0963">Cytoplasm</keyword>
<keyword id="KW-0967">Endosome</keyword>
<keyword id="KW-0880">Kelch repeat</keyword>
<keyword id="KW-0472">Membrane</keyword>
<keyword id="KW-0597">Phosphoprotein</keyword>
<keyword id="KW-1267">Proteomics identification</keyword>
<keyword id="KW-1185">Reference proteome</keyword>
<keyword id="KW-0677">Repeat</keyword>
<comment type="function">
    <text evidence="5">Rab9 effector required for endosome to trans-Golgi network (TGN) transport.</text>
</comment>
<comment type="subunit">
    <text evidence="2 4 5">Interacts with PIKFYVE; the interaction recruits RABEPK to the endosomal membrane (PubMed:14530284). Interacts with RAB9 in its GTP-bound conformation (PubMed:16769818, PubMed:9230071).</text>
</comment>
<comment type="subcellular location">
    <subcellularLocation>
        <location>Cytoplasm</location>
    </subcellularLocation>
    <subcellularLocation>
        <location evidence="2">Endosome membrane</location>
    </subcellularLocation>
    <text evidence="2">Interaction with PIKFYVE and subsequent phosphorylation recruits it to the endosomal membrane.</text>
</comment>
<comment type="alternative products">
    <event type="alternative splicing"/>
    <isoform>
        <id>Q7Z6M1-1</id>
        <name>1</name>
        <sequence type="displayed"/>
    </isoform>
    <isoform>
        <id>Q7Z6M1-2</id>
        <name>2</name>
        <sequence type="described" ref="VSP_023828"/>
    </isoform>
</comment>
<comment type="PTM">
    <text evidence="2">Phosphorylated on Ser residues by PIKFYVE.</text>
</comment>